<organism>
    <name type="scientific">Rattus norvegicus</name>
    <name type="common">Rat</name>
    <dbReference type="NCBI Taxonomy" id="10116"/>
    <lineage>
        <taxon>Eukaryota</taxon>
        <taxon>Metazoa</taxon>
        <taxon>Chordata</taxon>
        <taxon>Craniata</taxon>
        <taxon>Vertebrata</taxon>
        <taxon>Euteleostomi</taxon>
        <taxon>Mammalia</taxon>
        <taxon>Eutheria</taxon>
        <taxon>Euarchontoglires</taxon>
        <taxon>Glires</taxon>
        <taxon>Rodentia</taxon>
        <taxon>Myomorpha</taxon>
        <taxon>Muroidea</taxon>
        <taxon>Muridae</taxon>
        <taxon>Murinae</taxon>
        <taxon>Rattus</taxon>
    </lineage>
</organism>
<feature type="chain" id="PRO_0000165641" description="RuvB-like 1">
    <location>
        <begin position="1"/>
        <end position="456"/>
    </location>
</feature>
<feature type="binding site">
    <location>
        <begin position="70"/>
        <end position="77"/>
    </location>
    <ligand>
        <name>ATP</name>
        <dbReference type="ChEBI" id="CHEBI:30616"/>
    </ligand>
</feature>
<feature type="modified residue" description="N6-acetyllysine" evidence="2">
    <location>
        <position position="453"/>
    </location>
</feature>
<feature type="cross-link" description="Glycyl lysine isopeptide (Lys-Gly) (interchain with G-Cter in SUMO2)" evidence="2">
    <location>
        <position position="2"/>
    </location>
</feature>
<feature type="cross-link" description="Glycyl lysine isopeptide (Lys-Gly) (interchain with G-Cter in SUMO1); alternate" evidence="2">
    <location>
        <position position="225"/>
    </location>
</feature>
<feature type="cross-link" description="Glycyl lysine isopeptide (Lys-Gly) (interchain with G-Cter in SUMO2); alternate" evidence="2">
    <location>
        <position position="225"/>
    </location>
</feature>
<feature type="cross-link" description="Glycyl lysine isopeptide (Lys-Gly) (interchain with G-Cter in SUMO2)" evidence="2">
    <location>
        <position position="445"/>
    </location>
</feature>
<dbReference type="EC" id="3.6.4.12" evidence="2"/>
<dbReference type="EMBL" id="AB002406">
    <property type="protein sequence ID" value="BAA20875.1"/>
    <property type="molecule type" value="mRNA"/>
</dbReference>
<dbReference type="EMBL" id="AB001581">
    <property type="protein sequence ID" value="BAA76313.1"/>
    <property type="molecule type" value="mRNA"/>
</dbReference>
<dbReference type="EMBL" id="BC072511">
    <property type="protein sequence ID" value="AAH72511.1"/>
    <property type="molecule type" value="mRNA"/>
</dbReference>
<dbReference type="EMBL" id="BC086531">
    <property type="protein sequence ID" value="AAH86531.1"/>
    <property type="molecule type" value="mRNA"/>
</dbReference>
<dbReference type="PIR" id="JC5521">
    <property type="entry name" value="JC5521"/>
</dbReference>
<dbReference type="RefSeq" id="NP_671706.1">
    <property type="nucleotide sequence ID" value="NM_147177.1"/>
</dbReference>
<dbReference type="RefSeq" id="XP_006236927.1">
    <property type="nucleotide sequence ID" value="XM_006236865.2"/>
</dbReference>
<dbReference type="SMR" id="P60123"/>
<dbReference type="BioGRID" id="249258">
    <property type="interactions" value="7"/>
</dbReference>
<dbReference type="FunCoup" id="P60123">
    <property type="interactions" value="2889"/>
</dbReference>
<dbReference type="IntAct" id="P60123">
    <property type="interactions" value="3"/>
</dbReference>
<dbReference type="MINT" id="P60123"/>
<dbReference type="STRING" id="10116.ENSRNOP00000075190"/>
<dbReference type="iPTMnet" id="P60123"/>
<dbReference type="PhosphoSitePlus" id="P60123"/>
<dbReference type="jPOST" id="P60123"/>
<dbReference type="PaxDb" id="10116-ENSRNOP00000018339"/>
<dbReference type="Ensembl" id="ENSRNOT00000090875.2">
    <property type="protein sequence ID" value="ENSRNOP00000075190.1"/>
    <property type="gene ID" value="ENSRNOG00000013195.7"/>
</dbReference>
<dbReference type="GeneID" id="65137"/>
<dbReference type="KEGG" id="rno:65137"/>
<dbReference type="UCSC" id="RGD:68373">
    <property type="organism name" value="rat"/>
</dbReference>
<dbReference type="AGR" id="RGD:68373"/>
<dbReference type="CTD" id="8607"/>
<dbReference type="RGD" id="68373">
    <property type="gene designation" value="Ruvbl1"/>
</dbReference>
<dbReference type="eggNOG" id="KOG1942">
    <property type="taxonomic scope" value="Eukaryota"/>
</dbReference>
<dbReference type="GeneTree" id="ENSGT00940000153556"/>
<dbReference type="InParanoid" id="P60123"/>
<dbReference type="OMA" id="RTLPYNK"/>
<dbReference type="OrthoDB" id="10060499at2759"/>
<dbReference type="PhylomeDB" id="P60123"/>
<dbReference type="TreeFam" id="TF300457"/>
<dbReference type="Reactome" id="R-RNO-201722">
    <property type="pathway name" value="Formation of the beta-catenin:TCF transactivating complex"/>
</dbReference>
<dbReference type="Reactome" id="R-RNO-5689603">
    <property type="pathway name" value="UCH proteinases"/>
</dbReference>
<dbReference type="Reactome" id="R-RNO-5689880">
    <property type="pathway name" value="Ub-specific processing proteases"/>
</dbReference>
<dbReference type="Reactome" id="R-RNO-5696394">
    <property type="pathway name" value="DNA Damage Recognition in GG-NER"/>
</dbReference>
<dbReference type="Reactome" id="R-RNO-606279">
    <property type="pathway name" value="Deposition of new CENPA-containing nucleosomes at the centromere"/>
</dbReference>
<dbReference type="PRO" id="PR:P60123"/>
<dbReference type="Proteomes" id="UP000002494">
    <property type="component" value="Chromosome 4"/>
</dbReference>
<dbReference type="Bgee" id="ENSRNOG00000013195">
    <property type="expression patterns" value="Expressed in thymus and 20 other cell types or tissues"/>
</dbReference>
<dbReference type="GO" id="GO:0005813">
    <property type="term" value="C:centrosome"/>
    <property type="evidence" value="ECO:0007669"/>
    <property type="project" value="UniProtKB-SubCell"/>
</dbReference>
<dbReference type="GO" id="GO:0120293">
    <property type="term" value="C:dynein axonemal particle"/>
    <property type="evidence" value="ECO:0000250"/>
    <property type="project" value="UniProtKB"/>
</dbReference>
<dbReference type="GO" id="GO:0031011">
    <property type="term" value="C:Ino80 complex"/>
    <property type="evidence" value="ECO:0000266"/>
    <property type="project" value="RGD"/>
</dbReference>
<dbReference type="GO" id="GO:0071339">
    <property type="term" value="C:MLL1 complex"/>
    <property type="evidence" value="ECO:0000250"/>
    <property type="project" value="UniProtKB"/>
</dbReference>
<dbReference type="GO" id="GO:0035267">
    <property type="term" value="C:NuA4 histone acetyltransferase complex"/>
    <property type="evidence" value="ECO:0000250"/>
    <property type="project" value="UniProtKB"/>
</dbReference>
<dbReference type="GO" id="GO:0016363">
    <property type="term" value="C:nuclear matrix"/>
    <property type="evidence" value="ECO:0000314"/>
    <property type="project" value="RGD"/>
</dbReference>
<dbReference type="GO" id="GO:0031965">
    <property type="term" value="C:nuclear membrane"/>
    <property type="evidence" value="ECO:0007669"/>
    <property type="project" value="UniProtKB-SubCell"/>
</dbReference>
<dbReference type="GO" id="GO:0000786">
    <property type="term" value="C:nucleosome"/>
    <property type="evidence" value="ECO:0000266"/>
    <property type="project" value="RGD"/>
</dbReference>
<dbReference type="GO" id="GO:0005634">
    <property type="term" value="C:nucleus"/>
    <property type="evidence" value="ECO:0000266"/>
    <property type="project" value="RGD"/>
</dbReference>
<dbReference type="GO" id="GO:0101031">
    <property type="term" value="C:protein folding chaperone complex"/>
    <property type="evidence" value="ECO:0000266"/>
    <property type="project" value="RGD"/>
</dbReference>
<dbReference type="GO" id="GO:0032991">
    <property type="term" value="C:protein-containing complex"/>
    <property type="evidence" value="ECO:0000314"/>
    <property type="project" value="RGD"/>
</dbReference>
<dbReference type="GO" id="GO:0097255">
    <property type="term" value="C:R2TP complex"/>
    <property type="evidence" value="ECO:0000250"/>
    <property type="project" value="UniProtKB"/>
</dbReference>
<dbReference type="GO" id="GO:1990904">
    <property type="term" value="C:ribonucleoprotein complex"/>
    <property type="evidence" value="ECO:0000266"/>
    <property type="project" value="RGD"/>
</dbReference>
<dbReference type="GO" id="GO:1990062">
    <property type="term" value="C:RPAP3/R2TP/prefoldin-like complex"/>
    <property type="evidence" value="ECO:0000266"/>
    <property type="project" value="RGD"/>
</dbReference>
<dbReference type="GO" id="GO:0000812">
    <property type="term" value="C:Swr1 complex"/>
    <property type="evidence" value="ECO:0000250"/>
    <property type="project" value="UniProtKB"/>
</dbReference>
<dbReference type="GO" id="GO:0043138">
    <property type="term" value="F:3'-5' DNA helicase activity"/>
    <property type="evidence" value="ECO:0000314"/>
    <property type="project" value="RGD"/>
</dbReference>
<dbReference type="GO" id="GO:0043531">
    <property type="term" value="F:ADP binding"/>
    <property type="evidence" value="ECO:0000266"/>
    <property type="project" value="RGD"/>
</dbReference>
<dbReference type="GO" id="GO:0005524">
    <property type="term" value="F:ATP binding"/>
    <property type="evidence" value="ECO:0000266"/>
    <property type="project" value="RGD"/>
</dbReference>
<dbReference type="GO" id="GO:0016887">
    <property type="term" value="F:ATP hydrolysis activity"/>
    <property type="evidence" value="ECO:0000250"/>
    <property type="project" value="UniProtKB"/>
</dbReference>
<dbReference type="GO" id="GO:0051117">
    <property type="term" value="F:ATPase binding"/>
    <property type="evidence" value="ECO:0000266"/>
    <property type="project" value="RGD"/>
</dbReference>
<dbReference type="GO" id="GO:0003678">
    <property type="term" value="F:DNA helicase activity"/>
    <property type="evidence" value="ECO:0000266"/>
    <property type="project" value="RGD"/>
</dbReference>
<dbReference type="GO" id="GO:0017025">
    <property type="term" value="F:TBP-class protein binding"/>
    <property type="evidence" value="ECO:0000266"/>
    <property type="project" value="RGD"/>
</dbReference>
<dbReference type="GO" id="GO:0001094">
    <property type="term" value="F:TFIID-class transcription factor complex binding"/>
    <property type="evidence" value="ECO:0000266"/>
    <property type="project" value="RGD"/>
</dbReference>
<dbReference type="GO" id="GO:0003713">
    <property type="term" value="F:transcription coactivator activity"/>
    <property type="evidence" value="ECO:0000266"/>
    <property type="project" value="RGD"/>
</dbReference>
<dbReference type="GO" id="GO:0000492">
    <property type="term" value="P:box C/D snoRNP assembly"/>
    <property type="evidence" value="ECO:0000318"/>
    <property type="project" value="GO_Central"/>
</dbReference>
<dbReference type="GO" id="GO:0051301">
    <property type="term" value="P:cell division"/>
    <property type="evidence" value="ECO:0007669"/>
    <property type="project" value="UniProtKB-KW"/>
</dbReference>
<dbReference type="GO" id="GO:0006338">
    <property type="term" value="P:chromatin remodeling"/>
    <property type="evidence" value="ECO:0000266"/>
    <property type="project" value="RGD"/>
</dbReference>
<dbReference type="GO" id="GO:0006310">
    <property type="term" value="P:DNA recombination"/>
    <property type="evidence" value="ECO:0007669"/>
    <property type="project" value="UniProtKB-KW"/>
</dbReference>
<dbReference type="GO" id="GO:0006281">
    <property type="term" value="P:DNA repair"/>
    <property type="evidence" value="ECO:0007669"/>
    <property type="project" value="UniProtKB-KW"/>
</dbReference>
<dbReference type="GO" id="GO:0090263">
    <property type="term" value="P:positive regulation of canonical Wnt signaling pathway"/>
    <property type="evidence" value="ECO:0000266"/>
    <property type="project" value="RGD"/>
</dbReference>
<dbReference type="GO" id="GO:0045739">
    <property type="term" value="P:positive regulation of DNA repair"/>
    <property type="evidence" value="ECO:0000266"/>
    <property type="project" value="RGD"/>
</dbReference>
<dbReference type="GO" id="GO:0045893">
    <property type="term" value="P:positive regulation of DNA-templated transcription"/>
    <property type="evidence" value="ECO:0000266"/>
    <property type="project" value="RGD"/>
</dbReference>
<dbReference type="GO" id="GO:1905168">
    <property type="term" value="P:positive regulation of double-strand break repair via homologous recombination"/>
    <property type="evidence" value="ECO:0000266"/>
    <property type="project" value="RGD"/>
</dbReference>
<dbReference type="GO" id="GO:0010756">
    <property type="term" value="P:positive regulation of plasminogen activation"/>
    <property type="evidence" value="ECO:0000314"/>
    <property type="project" value="RGD"/>
</dbReference>
<dbReference type="GO" id="GO:1904507">
    <property type="term" value="P:positive regulation of telomere maintenance in response to DNA damage"/>
    <property type="evidence" value="ECO:0000266"/>
    <property type="project" value="RGD"/>
</dbReference>
<dbReference type="GO" id="GO:0051726">
    <property type="term" value="P:regulation of cell cycle"/>
    <property type="evidence" value="ECO:0000266"/>
    <property type="project" value="RGD"/>
</dbReference>
<dbReference type="GO" id="GO:0033044">
    <property type="term" value="P:regulation of chromosome organization"/>
    <property type="evidence" value="ECO:0000266"/>
    <property type="project" value="RGD"/>
</dbReference>
<dbReference type="GO" id="GO:0006282">
    <property type="term" value="P:regulation of DNA repair"/>
    <property type="evidence" value="ECO:0000266"/>
    <property type="project" value="RGD"/>
</dbReference>
<dbReference type="GO" id="GO:0006275">
    <property type="term" value="P:regulation of DNA replication"/>
    <property type="evidence" value="ECO:0000266"/>
    <property type="project" value="RGD"/>
</dbReference>
<dbReference type="GO" id="GO:0060382">
    <property type="term" value="P:regulation of DNA strand elongation"/>
    <property type="evidence" value="ECO:0000266"/>
    <property type="project" value="RGD"/>
</dbReference>
<dbReference type="GO" id="GO:0045995">
    <property type="term" value="P:regulation of embryonic development"/>
    <property type="evidence" value="ECO:0000266"/>
    <property type="project" value="RGD"/>
</dbReference>
<dbReference type="GO" id="GO:2000269">
    <property type="term" value="P:regulation of fibroblast apoptotic process"/>
    <property type="evidence" value="ECO:0000315"/>
    <property type="project" value="RGD"/>
</dbReference>
<dbReference type="GO" id="GO:0006357">
    <property type="term" value="P:regulation of transcription by RNA polymerase II"/>
    <property type="evidence" value="ECO:0000318"/>
    <property type="project" value="GO_Central"/>
</dbReference>
<dbReference type="GO" id="GO:0000723">
    <property type="term" value="P:telomere maintenance"/>
    <property type="evidence" value="ECO:0000266"/>
    <property type="project" value="RGD"/>
</dbReference>
<dbReference type="FunFam" id="1.10.8.60:FF:000010">
    <property type="entry name" value="RuvB-like helicase"/>
    <property type="match status" value="1"/>
</dbReference>
<dbReference type="FunFam" id="2.40.50.360:FF:000001">
    <property type="entry name" value="RuvB-like helicase"/>
    <property type="match status" value="1"/>
</dbReference>
<dbReference type="Gene3D" id="1.10.8.60">
    <property type="match status" value="1"/>
</dbReference>
<dbReference type="Gene3D" id="3.40.50.300">
    <property type="entry name" value="P-loop containing nucleotide triphosphate hydrolases"/>
    <property type="match status" value="1"/>
</dbReference>
<dbReference type="Gene3D" id="2.40.50.360">
    <property type="entry name" value="RuvB-like helicase, domain II"/>
    <property type="match status" value="1"/>
</dbReference>
<dbReference type="InterPro" id="IPR003593">
    <property type="entry name" value="AAA+_ATPase"/>
</dbReference>
<dbReference type="InterPro" id="IPR027417">
    <property type="entry name" value="P-loop_NTPase"/>
</dbReference>
<dbReference type="InterPro" id="IPR027238">
    <property type="entry name" value="RuvB-like"/>
</dbReference>
<dbReference type="InterPro" id="IPR041048">
    <property type="entry name" value="RuvB-like_C"/>
</dbReference>
<dbReference type="InterPro" id="IPR042487">
    <property type="entry name" value="RuvBL1/2_DNA/RNA_bd_dom"/>
</dbReference>
<dbReference type="InterPro" id="IPR010339">
    <property type="entry name" value="TIP49_P-loop"/>
</dbReference>
<dbReference type="PANTHER" id="PTHR11093">
    <property type="entry name" value="RUVB-RELATED REPTIN AND PONTIN"/>
    <property type="match status" value="1"/>
</dbReference>
<dbReference type="Pfam" id="PF06068">
    <property type="entry name" value="TIP49"/>
    <property type="match status" value="1"/>
</dbReference>
<dbReference type="Pfam" id="PF17856">
    <property type="entry name" value="TIP49_C"/>
    <property type="match status" value="1"/>
</dbReference>
<dbReference type="SMART" id="SM00382">
    <property type="entry name" value="AAA"/>
    <property type="match status" value="1"/>
</dbReference>
<dbReference type="SUPFAM" id="SSF52540">
    <property type="entry name" value="P-loop containing nucleoside triphosphate hydrolases"/>
    <property type="match status" value="1"/>
</dbReference>
<evidence type="ECO:0000250" key="1">
    <source>
        <dbReference type="UniProtKB" id="Q9DE26"/>
    </source>
</evidence>
<evidence type="ECO:0000250" key="2">
    <source>
        <dbReference type="UniProtKB" id="Q9Y265"/>
    </source>
</evidence>
<evidence type="ECO:0000269" key="3">
    <source>
    </source>
</evidence>
<evidence type="ECO:0000305" key="4"/>
<name>RUVB1_RAT</name>
<protein>
    <recommendedName>
        <fullName>RuvB-like 1</fullName>
        <ecNumber evidence="2">3.6.4.12</ecNumber>
    </recommendedName>
    <alternativeName>
        <fullName>49 kDa TATA box-binding protein-interacting protein</fullName>
        <shortName>49 kDa TBP-interacting protein</shortName>
    </alternativeName>
    <alternativeName>
        <fullName>DNA helicase p50</fullName>
    </alternativeName>
    <alternativeName>
        <fullName>Pontin 52</fullName>
    </alternativeName>
    <alternativeName>
        <fullName>TIP49a</fullName>
    </alternativeName>
</protein>
<sequence>MKIEEVKSTTKTQRIASHSHVKGLGLDESGLAKQAASGLVGQENAREACGVIVELIKSKKMAGRAVLLAGPPGTGKTALALAIAQELGSKVPFCPMVGSEVYSTEIKKTEVLMENFRRAIGLRIKETKEVYEGEVTELTPCETENPMGGYGKTISHVIIGLKTAKGTKQLKLDPSIFESLQKERVEAGDVIYIEANSGAVKRQGRCDTYATEFDLEAEEYVPLPKGDVHKKKEIIQDVTLHDLDVANARPQGGQDILSMMGQLMKPKKTEITDKLRGEINKVVNKYIDQGVAELVPGVLFVDEVHMLDIECFTYLHRALESSIAPIVIFASNRGNCVIRGTEDITSPHGIPLDLLDRVMIIRTMLYTPQEMKQIIKIRAQTEGINISEEALNHLGEIGTKTTLRYSVQLLTPANLLAKINGKDSIEKEHVEEISELFYDAKSSAKILADQQDKYMK</sequence>
<accession>P60123</accession>
<accession>O35753</accession>
<comment type="function">
    <text evidence="2">Possesses single-stranded DNA-stimulated ATPase and ATP-dependent DNA helicase (3' to 5') activity; hexamerization is thought to be critical for ATP hydrolysis and adjacent subunits in the ring-like structure contribute to the ATPase activity (By similarity). Component of the NuA4 histone acetyltransferase complex which is involved in transcriptional activation of select genes principally by acetylation of nucleosomal histones H4 and H2A (By similarity). This modification may both alter nucleosome-DNA interactions and promote interaction of the modified histones with other proteins which positively regulate transcription (By similarity). This complex may be required for the activation of transcriptional programs associated with oncogene and proto-oncogene mediated growth induction, tumor suppressor mediated growth arrest and replicative senescence, apoptosis, and DNA repair (By similarity). The NuA4 complex ATPase and helicase activities seem to be, at least in part, contributed by the association of RUVBL1 and RUVBL2 with EP400 (By similarity). NuA4 may also play a direct role in DNA repair when recruited to sites of DNA damage (By similarity). Component of a SWR1-like complex that specifically mediates the removal of histone H2A.Z/H2AZ1 from the nucleosome (By similarity). Proposed core component of the chromatin remodeling INO80 complex which exhibits DNA- and nucleosome-activated ATPase activity and catalyzes ATP-dependent nucleosome sliding (By similarity). Plays an essential role in oncogenic transformation by MYC and also modulates transcriptional activation by the LEF1/TCF1-CTNNB1 complex (By similarity). Essential for cell proliferation (By similarity). May be able to bind plasminogen at cell surface and enhance plasminogen activation (By similarity).</text>
</comment>
<comment type="catalytic activity">
    <reaction evidence="2">
        <text>ATP + H2O = ADP + phosphate + H(+)</text>
        <dbReference type="Rhea" id="RHEA:13065"/>
        <dbReference type="ChEBI" id="CHEBI:15377"/>
        <dbReference type="ChEBI" id="CHEBI:15378"/>
        <dbReference type="ChEBI" id="CHEBI:30616"/>
        <dbReference type="ChEBI" id="CHEBI:43474"/>
        <dbReference type="ChEBI" id="CHEBI:456216"/>
        <dbReference type="EC" id="3.6.4.12"/>
    </reaction>
    <physiologicalReaction direction="left-to-right" evidence="2">
        <dbReference type="Rhea" id="RHEA:13066"/>
    </physiologicalReaction>
</comment>
<comment type="subunit">
    <text evidence="2">Forms homohexameric rings. Can form a dodecamer with RUVBL2 made of two stacked hexameric rings; however, even though RUVBL1 and RUVBL2 are present in equimolar ratio, the oligomeric status of each hexamer is not known. Oligomerization may regulate binding to nucleic acids and conversely, binding to nucleic acids may affect the dodecameric assembly. Interaction of the complex with DHX34 results in conformational changes of the N-terminus of the RUVBL2 subunits, resulting in loss of nucleotide binding ability and ATP hydrolysis of the complex (By similarity). Interacts with the transcriptional activation domain of MYC. Component of the RNA polymerase II holoenzyme complex. May also act to bridge the LEF1/TCF1-CTNNB1 complex and TBP. Component of the NuA4 histone acetyltransferase complex which contains the catalytic subunit KAT5/TIP60 and the subunits EP400, TRRAP/PAF400, BRD8/SMAP, EPC1, DMAP1/DNMAP1, RUVBL1/TIP49, RUVBL2, ING3, actin, ACTL6A/BAF53A, MORF4L1/MRG15, MORF4L2/MRGX, MRGBP, YEATS4/GAS41, VPS72/YL1 and MEAF6. The NuA4 complex interacts with MYC and the adenovirus E1A protein. RUVBL1 interacts with EP400. Component of a NuA4-related complex which contains EP400, TRRAP/PAF400, SRCAP, BRD8/SMAP, EPC1, DMAP1/DNMAP1, RUVBL1/TIP49, RUVBL2, actin, ACTL6A/BAF53A, VPS72 and YEATS4/GAS41. Component of the BAF53 complex, at least composed of ACTL6A/BAF53A, RUVBL1/TIP49, SMARCA2/BRM, and TRRAP/PAF400. Component of some MLL1/MLL complex, at least composed of the core components KMT2A/MLL1, ASH2L, HCFC1/HCF1, WDR5 and RBBP5, as well as the facultative components BACC1, CHD8, E2F6, HSP70, INO80C, KANSL1, LAS1L, MAX, MCRS1, MGA, MYST1/MOF, PELP1, PHF20, PRP31, RING2, RUVB1/TIP49A, RUVB2/TIP49B, SENP3, TAF1, TAF4, TAF6, TAF7, TAF9 and TEX10. Associates with alpha and gamma tubulins, particularly during metaphase and early anaphase. Interacts with NPAT. Component of the chromatin-remodeling INO80 complex; specifically part of a complex module associated with the helicase ATP-binding and the helicase C-terminal domain of INO80. Interacts with IGHMBP2. Interacts with OFD1. Interacts with HINT1. Component of a complex with USP49 and PSMC5. Component of a SWR1-like complex. Component of the R2TP complex composed at least of RUVBL1, RUVBL2, RPAP3 and PIHD1. Component of the PAQosome complex which is responsible for the biogenesis of several protein complexes and which consists of R2TP complex members RUVBL1, RUVBL2, RPAP3 and PIH1D1, URI complex members PFDN2, PFDN6, PDRG1, UXT and URI1 as well as ASDURF, POLR2E and DNAAF10/WDR92. Interacts with PIH1D1. Interacts with ITFG1. Interacts with WAC; WAC positively regulates MTOR activity by promoting the assembly of the TTT complex composed of TELO2, TTI1 and TTI2 and the RUVBL complex composed of RUVBL1 and RUVBL2 into the TTT-RUVBL complex which leads to the dimerization of the mTORC1 complex and its subsequent activation (By similarity). The RUVBL1/RUVBL2 complex interacts with ZNHIT1 (via HIT-type zinc finger), ZNHIT3 (via HIT-type zinc finger), ZNHIT6 (via HIT-type zinc finger) and DDX59/ZNHIT5 (via HIT-type zinc finger) in the presence of ADP (By similarity). Interacts with NOPCHAP1; the interaction is direct and disrupted upon ATP binding (By similarity). Interacts with SMG1 (By similarity). Interacts with NOP2, NOP56 and NUFIP1 (By similarity).</text>
</comment>
<comment type="subcellular location">
    <subcellularLocation>
        <location evidence="2">Nucleus membrane</location>
    </subcellularLocation>
    <subcellularLocation>
        <location evidence="2">Nucleus</location>
        <location evidence="2">Nucleoplasm</location>
    </subcellularLocation>
    <subcellularLocation>
        <location evidence="2">Cytoplasm</location>
    </subcellularLocation>
    <subcellularLocation>
        <location evidence="2">Membrane</location>
    </subcellularLocation>
    <subcellularLocation>
        <location evidence="2">Cytoplasm</location>
        <location evidence="2">Cytoskeleton</location>
        <location evidence="2">Microtubule organizing center</location>
        <location evidence="2">Centrosome</location>
    </subcellularLocation>
    <subcellularLocation>
        <location evidence="1">Dynein axonemal particle</location>
    </subcellularLocation>
    <text evidence="2">Mainly localized in the nucleus, associated with nuclear matrix or in the nuclear cytosol, although it is also present in the cytoplasm and associated with the cell membranes. In prophase and prometaphase it is located at the centrosome and the branching microtubule spindles. After mitotic nuclear membrane disintigration it accumulates at the centrosome and sites of tubulin polymerization. As cells pass through metaphase and into telophase it is located close to the centrosome at the early phase of tubulin polymerization. In anaphase it accumulates at the zone of tubule interdigitation. In telophase it is found at polar tubule overlap, and it reappears at the site of chromosomal decondensation in the daughter cells.</text>
</comment>
<comment type="tissue specificity">
    <text evidence="3">Abundantly expressed in testes and moderately in spleen, thymus, and lung. In mouse seminiferous tubules, is specifically localized in germ cells from late pachytene spermatocytes to round spermatids.</text>
</comment>
<comment type="similarity">
    <text evidence="4">Belongs to the RuvB family.</text>
</comment>
<reference key="1">
    <citation type="journal article" date="1997" name="Biochem. Biophys. Res. Commun.">
        <title>Molecular cloning of a rat 49-kDa TBP-interacting protein (TIP49) that is highly homologous to the bacterial RuvB.</title>
        <authorList>
            <person name="Kanemaki M."/>
            <person name="Makino Y."/>
            <person name="Yoshida T."/>
            <person name="Kishimoto T."/>
            <person name="Koga A."/>
            <person name="Yamamoto K."/>
            <person name="Yamamoto M."/>
            <person name="Moncollin V."/>
            <person name="Egly J.-M."/>
            <person name="Muramatsu M."/>
            <person name="Tamura T.-A."/>
        </authorList>
    </citation>
    <scope>NUCLEOTIDE SEQUENCE [MRNA]</scope>
    <scope>PROTEIN SEQUENCE OF 1-11; 34-45; 129-138 AND 446-452</scope>
    <source>
        <tissue>Liver</tissue>
    </source>
</reference>
<reference key="2">
    <citation type="journal article" date="1999" name="J. Biochem.">
        <title>Molecular shape and ATP binding activity of rat p50, a putative mammalian homologue of RuvB DNA helicase.</title>
        <authorList>
            <person name="Kikuchi N."/>
            <person name="Gohshi T."/>
            <person name="Kawahire S."/>
            <person name="Tachibana T."/>
            <person name="Yoneda Y."/>
            <person name="Isobe T."/>
            <person name="Lim C.R."/>
            <person name="Kohno K."/>
            <person name="Ichimura T."/>
            <person name="Omata S."/>
            <person name="Horigome T."/>
        </authorList>
    </citation>
    <scope>NUCLEOTIDE SEQUENCE [MRNA]</scope>
    <scope>PROTEIN SEQUENCE OF 1-9; 91-102; 377-398 AND 441</scope>
    <source>
        <strain>Fischer 344</strain>
        <tissue>Liver</tissue>
    </source>
</reference>
<reference key="3">
    <citation type="journal article" date="2004" name="Genome Res.">
        <title>The status, quality, and expansion of the NIH full-length cDNA project: the Mammalian Gene Collection (MGC).</title>
        <authorList>
            <consortium name="The MGC Project Team"/>
        </authorList>
    </citation>
    <scope>NUCLEOTIDE SEQUENCE [LARGE SCALE MRNA]</scope>
    <source>
        <tissue>Heart</tissue>
        <tissue>Ovary</tissue>
    </source>
</reference>
<reference key="4">
    <citation type="journal article" date="1999" name="J. Biol. Chem.">
        <title>A rat RuvB-like protein, TIP49a, is a germ cell-enriched novel DNA helicase.</title>
        <authorList>
            <person name="Makino Y."/>
            <person name="Kanemaki M."/>
            <person name="Kurokawa Y."/>
            <person name="Koji T."/>
            <person name="Tamura T.-A."/>
        </authorList>
    </citation>
    <scope>TISSUE SPECIFICITY</scope>
</reference>
<keyword id="KW-0007">Acetylation</keyword>
<keyword id="KW-0010">Activator</keyword>
<keyword id="KW-0067">ATP-binding</keyword>
<keyword id="KW-0131">Cell cycle</keyword>
<keyword id="KW-0132">Cell division</keyword>
<keyword id="KW-0156">Chromatin regulator</keyword>
<keyword id="KW-0963">Cytoplasm</keyword>
<keyword id="KW-0206">Cytoskeleton</keyword>
<keyword id="KW-0903">Direct protein sequencing</keyword>
<keyword id="KW-0227">DNA damage</keyword>
<keyword id="KW-0233">DNA recombination</keyword>
<keyword id="KW-0234">DNA repair</keyword>
<keyword id="KW-0341">Growth regulation</keyword>
<keyword id="KW-0347">Helicase</keyword>
<keyword id="KW-0378">Hydrolase</keyword>
<keyword id="KW-1017">Isopeptide bond</keyword>
<keyword id="KW-0472">Membrane</keyword>
<keyword id="KW-0498">Mitosis</keyword>
<keyword id="KW-0547">Nucleotide-binding</keyword>
<keyword id="KW-0539">Nucleus</keyword>
<keyword id="KW-1185">Reference proteome</keyword>
<keyword id="KW-0804">Transcription</keyword>
<keyword id="KW-0805">Transcription regulation</keyword>
<keyword id="KW-0832">Ubl conjugation</keyword>
<gene>
    <name type="primary">Ruvbl1</name>
    <name type="synonym">Tip49</name>
    <name type="synonym">Tip49a</name>
</gene>
<proteinExistence type="evidence at protein level"/>